<comment type="function">
    <text evidence="1">This b-type cytochrome is tightly associated with the reaction center of photosystem II (PSII). PSII is a light-driven water:plastoquinone oxidoreductase that uses light energy to abstract electrons from H(2)O, generating O(2) and a proton gradient subsequently used for ATP formation. It consists of a core antenna complex that captures photons, and an electron transfer chain that converts photonic excitation into a charge separation.</text>
</comment>
<comment type="cofactor">
    <cofactor evidence="1">
        <name>heme b</name>
        <dbReference type="ChEBI" id="CHEBI:60344"/>
    </cofactor>
    <text evidence="1">With its partner (PsbE) binds heme. PSII binds additional chlorophylls, carotenoids and specific lipids.</text>
</comment>
<comment type="subunit">
    <text evidence="2">Heterodimer of an alpha subunit and a beta subunit. PSII is composed of 1 copy each of membrane proteins PsbA, PsbB, PsbC, PsbD, PsbE, PsbF, PsbH, PsbI, PsbJ, PsbK, PsbL, PsbM, PsbT, PsbX, PsbY, Psb30/Ycf12, peripheral proteins PsbO, CyanoQ (PsbQ), PsbU, PsbV and a large number of cofactors. It forms dimeric complexes.</text>
</comment>
<comment type="subcellular location">
    <subcellularLocation>
        <location evidence="1">Cellular thylakoid membrane</location>
        <topology evidence="1">Single-pass membrane protein</topology>
    </subcellularLocation>
</comment>
<comment type="similarity">
    <text evidence="1">Belongs to the PsbE/PsbF family.</text>
</comment>
<evidence type="ECO:0000255" key="1">
    <source>
        <dbReference type="HAMAP-Rule" id="MF_00643"/>
    </source>
</evidence>
<evidence type="ECO:0000305" key="2"/>
<proteinExistence type="inferred from homology"/>
<keyword id="KW-0249">Electron transport</keyword>
<keyword id="KW-0349">Heme</keyword>
<keyword id="KW-0408">Iron</keyword>
<keyword id="KW-0472">Membrane</keyword>
<keyword id="KW-0479">Metal-binding</keyword>
<keyword id="KW-0602">Photosynthesis</keyword>
<keyword id="KW-0604">Photosystem II</keyword>
<keyword id="KW-0793">Thylakoid</keyword>
<keyword id="KW-0812">Transmembrane</keyword>
<keyword id="KW-1133">Transmembrane helix</keyword>
<keyword id="KW-0813">Transport</keyword>
<accession>Q31CN4</accession>
<name>PSBF_PROM9</name>
<reference key="1">
    <citation type="journal article" date="2006" name="Science">
        <title>Genomic islands and the ecology and evolution of Prochlorococcus.</title>
        <authorList>
            <person name="Coleman M.L."/>
            <person name="Sullivan M.B."/>
            <person name="Martiny A.C."/>
            <person name="Steglich C."/>
            <person name="Barry K."/>
            <person name="Delong E.F."/>
            <person name="Chisholm S.W."/>
        </authorList>
    </citation>
    <scope>NUCLEOTIDE SEQUENCE [LARGE SCALE GENOMIC DNA]</scope>
    <source>
        <strain>MIT 9312</strain>
    </source>
</reference>
<feature type="chain" id="PRO_0000233655" description="Cytochrome b559 subunit beta">
    <location>
        <begin position="1"/>
        <end position="48"/>
    </location>
</feature>
<feature type="transmembrane region" description="Helical" evidence="1">
    <location>
        <begin position="23"/>
        <end position="39"/>
    </location>
</feature>
<feature type="binding site" description="axial binding residue" evidence="1">
    <location>
        <position position="27"/>
    </location>
    <ligand>
        <name>heme</name>
        <dbReference type="ChEBI" id="CHEBI:30413"/>
        <note>ligand shared with alpha subunit</note>
    </ligand>
    <ligandPart>
        <name>Fe</name>
        <dbReference type="ChEBI" id="CHEBI:18248"/>
    </ligandPart>
</feature>
<protein>
    <recommendedName>
        <fullName evidence="1">Cytochrome b559 subunit beta</fullName>
    </recommendedName>
    <alternativeName>
        <fullName evidence="1">PSII reaction center subunit VI</fullName>
    </alternativeName>
</protein>
<dbReference type="EMBL" id="CP000111">
    <property type="protein sequence ID" value="ABB49361.1"/>
    <property type="molecule type" value="Genomic_DNA"/>
</dbReference>
<dbReference type="RefSeq" id="WP_011375863.1">
    <property type="nucleotide sequence ID" value="NC_007577.1"/>
</dbReference>
<dbReference type="STRING" id="74546.PMT9312_0300"/>
<dbReference type="KEGG" id="pmi:PMT9312_0300"/>
<dbReference type="HOGENOM" id="CLU_211753_1_0_3"/>
<dbReference type="OrthoDB" id="532613at2"/>
<dbReference type="Proteomes" id="UP000002715">
    <property type="component" value="Chromosome"/>
</dbReference>
<dbReference type="GO" id="GO:0009539">
    <property type="term" value="C:photosystem II reaction center"/>
    <property type="evidence" value="ECO:0007669"/>
    <property type="project" value="InterPro"/>
</dbReference>
<dbReference type="GO" id="GO:0031676">
    <property type="term" value="C:plasma membrane-derived thylakoid membrane"/>
    <property type="evidence" value="ECO:0007669"/>
    <property type="project" value="UniProtKB-SubCell"/>
</dbReference>
<dbReference type="GO" id="GO:0009055">
    <property type="term" value="F:electron transfer activity"/>
    <property type="evidence" value="ECO:0007669"/>
    <property type="project" value="UniProtKB-UniRule"/>
</dbReference>
<dbReference type="GO" id="GO:0020037">
    <property type="term" value="F:heme binding"/>
    <property type="evidence" value="ECO:0007669"/>
    <property type="project" value="InterPro"/>
</dbReference>
<dbReference type="GO" id="GO:0005506">
    <property type="term" value="F:iron ion binding"/>
    <property type="evidence" value="ECO:0007669"/>
    <property type="project" value="UniProtKB-UniRule"/>
</dbReference>
<dbReference type="GO" id="GO:0009767">
    <property type="term" value="P:photosynthetic electron transport chain"/>
    <property type="evidence" value="ECO:0007669"/>
    <property type="project" value="InterPro"/>
</dbReference>
<dbReference type="HAMAP" id="MF_00643">
    <property type="entry name" value="PSII_PsbF"/>
    <property type="match status" value="1"/>
</dbReference>
<dbReference type="InterPro" id="IPR006241">
    <property type="entry name" value="PSII_cyt_b559_bsu"/>
</dbReference>
<dbReference type="InterPro" id="IPR006216">
    <property type="entry name" value="PSII_cyt_b559_CS"/>
</dbReference>
<dbReference type="InterPro" id="IPR013081">
    <property type="entry name" value="PSII_cyt_b559_N"/>
</dbReference>
<dbReference type="NCBIfam" id="TIGR01333">
    <property type="entry name" value="cyt_b559_beta"/>
    <property type="match status" value="1"/>
</dbReference>
<dbReference type="Pfam" id="PF00283">
    <property type="entry name" value="Cytochrom_B559"/>
    <property type="match status" value="1"/>
</dbReference>
<dbReference type="PIRSF" id="PIRSF000037">
    <property type="entry name" value="PsbF"/>
    <property type="match status" value="1"/>
</dbReference>
<dbReference type="SUPFAM" id="SSF161045">
    <property type="entry name" value="Cytochrome b559 subunits"/>
    <property type="match status" value="1"/>
</dbReference>
<dbReference type="PROSITE" id="PS00537">
    <property type="entry name" value="CYTOCHROME_B559"/>
    <property type="match status" value="1"/>
</dbReference>
<gene>
    <name evidence="1" type="primary">psbF</name>
    <name type="ordered locus">PMT9312_0300</name>
</gene>
<sequence length="48" mass="5308">MTNSQAPMQAAEVRVYPIFTVRWLAVHALAIPSVFFLGSIAAMQFVAR</sequence>
<organism>
    <name type="scientific">Prochlorococcus marinus (strain MIT 9312)</name>
    <dbReference type="NCBI Taxonomy" id="74546"/>
    <lineage>
        <taxon>Bacteria</taxon>
        <taxon>Bacillati</taxon>
        <taxon>Cyanobacteriota</taxon>
        <taxon>Cyanophyceae</taxon>
        <taxon>Synechococcales</taxon>
        <taxon>Prochlorococcaceae</taxon>
        <taxon>Prochlorococcus</taxon>
    </lineage>
</organism>